<dbReference type="EC" id="2.7.7.6" evidence="1"/>
<dbReference type="EMBL" id="CR954199">
    <property type="protein sequence ID" value="CAL36367.1"/>
    <property type="molecule type" value="Genomic_DNA"/>
</dbReference>
<dbReference type="RefSeq" id="YP_717245.1">
    <property type="nucleotide sequence ID" value="NC_008289.1"/>
</dbReference>
<dbReference type="SMR" id="Q0P3L0"/>
<dbReference type="FunCoup" id="Q0P3L0">
    <property type="interactions" value="97"/>
</dbReference>
<dbReference type="STRING" id="70448.Q0P3L0"/>
<dbReference type="GeneID" id="4238797"/>
<dbReference type="KEGG" id="ota:OstapCp42"/>
<dbReference type="eggNOG" id="ENOG502QRS7">
    <property type="taxonomic scope" value="Eukaryota"/>
</dbReference>
<dbReference type="InParanoid" id="Q0P3L0"/>
<dbReference type="Proteomes" id="UP000009170">
    <property type="component" value="Chloroplast"/>
</dbReference>
<dbReference type="GO" id="GO:0009507">
    <property type="term" value="C:chloroplast"/>
    <property type="evidence" value="ECO:0007669"/>
    <property type="project" value="UniProtKB-SubCell"/>
</dbReference>
<dbReference type="GO" id="GO:0000428">
    <property type="term" value="C:DNA-directed RNA polymerase complex"/>
    <property type="evidence" value="ECO:0007669"/>
    <property type="project" value="UniProtKB-KW"/>
</dbReference>
<dbReference type="GO" id="GO:0005739">
    <property type="term" value="C:mitochondrion"/>
    <property type="evidence" value="ECO:0007669"/>
    <property type="project" value="GOC"/>
</dbReference>
<dbReference type="GO" id="GO:0003677">
    <property type="term" value="F:DNA binding"/>
    <property type="evidence" value="ECO:0007669"/>
    <property type="project" value="UniProtKB-UniRule"/>
</dbReference>
<dbReference type="GO" id="GO:0003899">
    <property type="term" value="F:DNA-directed RNA polymerase activity"/>
    <property type="evidence" value="ECO:0007669"/>
    <property type="project" value="UniProtKB-UniRule"/>
</dbReference>
<dbReference type="GO" id="GO:0046983">
    <property type="term" value="F:protein dimerization activity"/>
    <property type="evidence" value="ECO:0007669"/>
    <property type="project" value="InterPro"/>
</dbReference>
<dbReference type="GO" id="GO:0006351">
    <property type="term" value="P:DNA-templated transcription"/>
    <property type="evidence" value="ECO:0007669"/>
    <property type="project" value="UniProtKB-UniRule"/>
</dbReference>
<dbReference type="CDD" id="cd06928">
    <property type="entry name" value="RNAP_alpha_NTD"/>
    <property type="match status" value="1"/>
</dbReference>
<dbReference type="Gene3D" id="1.10.150.20">
    <property type="entry name" value="5' to 3' exonuclease, C-terminal subdomain"/>
    <property type="match status" value="1"/>
</dbReference>
<dbReference type="Gene3D" id="2.170.120.12">
    <property type="entry name" value="DNA-directed RNA polymerase, insert domain"/>
    <property type="match status" value="1"/>
</dbReference>
<dbReference type="Gene3D" id="3.30.1360.10">
    <property type="entry name" value="RNA polymerase, RBP11-like subunit"/>
    <property type="match status" value="1"/>
</dbReference>
<dbReference type="HAMAP" id="MF_00059">
    <property type="entry name" value="RNApol_bact_RpoA"/>
    <property type="match status" value="1"/>
</dbReference>
<dbReference type="InterPro" id="IPR011262">
    <property type="entry name" value="DNA-dir_RNA_pol_insert"/>
</dbReference>
<dbReference type="InterPro" id="IPR011263">
    <property type="entry name" value="DNA-dir_RNA_pol_RpoA/D/Rpb3"/>
</dbReference>
<dbReference type="InterPro" id="IPR011773">
    <property type="entry name" value="DNA-dir_RpoA"/>
</dbReference>
<dbReference type="InterPro" id="IPR036603">
    <property type="entry name" value="RBP11-like"/>
</dbReference>
<dbReference type="InterPro" id="IPR011260">
    <property type="entry name" value="RNAP_asu_C"/>
</dbReference>
<dbReference type="InterPro" id="IPR036643">
    <property type="entry name" value="RNApol_insert_sf"/>
</dbReference>
<dbReference type="Pfam" id="PF01000">
    <property type="entry name" value="RNA_pol_A_bac"/>
    <property type="match status" value="1"/>
</dbReference>
<dbReference type="Pfam" id="PF03118">
    <property type="entry name" value="RNA_pol_A_CTD"/>
    <property type="match status" value="1"/>
</dbReference>
<dbReference type="Pfam" id="PF01193">
    <property type="entry name" value="RNA_pol_L"/>
    <property type="match status" value="1"/>
</dbReference>
<dbReference type="SMART" id="SM00662">
    <property type="entry name" value="RPOLD"/>
    <property type="match status" value="1"/>
</dbReference>
<dbReference type="SUPFAM" id="SSF47789">
    <property type="entry name" value="C-terminal domain of RNA polymerase alpha subunit"/>
    <property type="match status" value="1"/>
</dbReference>
<dbReference type="SUPFAM" id="SSF56553">
    <property type="entry name" value="Insert subdomain of RNA polymerase alpha subunit"/>
    <property type="match status" value="1"/>
</dbReference>
<dbReference type="SUPFAM" id="SSF55257">
    <property type="entry name" value="RBP11-like subunits of RNA polymerase"/>
    <property type="match status" value="1"/>
</dbReference>
<protein>
    <recommendedName>
        <fullName evidence="1">DNA-directed RNA polymerase subunit alpha</fullName>
        <shortName evidence="1">PEP</shortName>
        <ecNumber evidence="1">2.7.7.6</ecNumber>
    </recommendedName>
    <alternativeName>
        <fullName evidence="1">Plastid-encoded RNA polymerase subunit alpha</fullName>
        <shortName evidence="1">RNA polymerase subunit alpha</shortName>
    </alternativeName>
</protein>
<feature type="chain" id="PRO_0000275692" description="DNA-directed RNA polymerase subunit alpha">
    <location>
        <begin position="1"/>
        <end position="356"/>
    </location>
</feature>
<feature type="region of interest" description="Alpha N-terminal domain (alpha-NTD)" evidence="1">
    <location>
        <begin position="1"/>
        <end position="259"/>
    </location>
</feature>
<feature type="region of interest" description="Alpha C-terminal domain (alpha-CTD)" evidence="1">
    <location>
        <begin position="277"/>
        <end position="356"/>
    </location>
</feature>
<name>RPOA_OSTTA</name>
<gene>
    <name evidence="1" type="primary">rpoA</name>
    <name type="ordered locus">OtCpg00420</name>
</gene>
<comment type="function">
    <text evidence="1">DNA-dependent RNA polymerase catalyzes the transcription of DNA into RNA using the four ribonucleoside triphosphates as substrates.</text>
</comment>
<comment type="catalytic activity">
    <reaction evidence="1">
        <text>RNA(n) + a ribonucleoside 5'-triphosphate = RNA(n+1) + diphosphate</text>
        <dbReference type="Rhea" id="RHEA:21248"/>
        <dbReference type="Rhea" id="RHEA-COMP:14527"/>
        <dbReference type="Rhea" id="RHEA-COMP:17342"/>
        <dbReference type="ChEBI" id="CHEBI:33019"/>
        <dbReference type="ChEBI" id="CHEBI:61557"/>
        <dbReference type="ChEBI" id="CHEBI:140395"/>
        <dbReference type="EC" id="2.7.7.6"/>
    </reaction>
</comment>
<comment type="subunit">
    <text evidence="1">In plastids the minimal PEP RNA polymerase catalytic core is composed of four subunits: alpha, beta, beta', and beta''. When a (nuclear-encoded) sigma factor is associated with the core the holoenzyme is formed, which can initiate transcription.</text>
</comment>
<comment type="subcellular location">
    <subcellularLocation>
        <location>Plastid</location>
        <location>Chloroplast</location>
    </subcellularLocation>
</comment>
<comment type="domain">
    <text evidence="1">The N-terminal domain is essential for RNAP assembly and basal transcription, whereas the C-terminal domain is involved in interaction with transcriptional regulators and with upstream promoter elements.</text>
</comment>
<comment type="similarity">
    <text evidence="1">Belongs to the RNA polymerase alpha chain family.</text>
</comment>
<organism>
    <name type="scientific">Ostreococcus tauri</name>
    <dbReference type="NCBI Taxonomy" id="70448"/>
    <lineage>
        <taxon>Eukaryota</taxon>
        <taxon>Viridiplantae</taxon>
        <taxon>Chlorophyta</taxon>
        <taxon>Mamiellophyceae</taxon>
        <taxon>Mamiellales</taxon>
        <taxon>Bathycoccaceae</taxon>
        <taxon>Ostreococcus</taxon>
    </lineage>
</organism>
<keyword id="KW-0150">Chloroplast</keyword>
<keyword id="KW-0240">DNA-directed RNA polymerase</keyword>
<keyword id="KW-0548">Nucleotidyltransferase</keyword>
<keyword id="KW-0934">Plastid</keyword>
<keyword id="KW-1185">Reference proteome</keyword>
<keyword id="KW-0804">Transcription</keyword>
<keyword id="KW-0808">Transferase</keyword>
<evidence type="ECO:0000255" key="1">
    <source>
        <dbReference type="HAMAP-Rule" id="MF_00059"/>
    </source>
</evidence>
<geneLocation type="chloroplast"/>
<sequence>MIKAAATLKSLQYRQNSLTDCYGRLSFGPVNPGQGLTIGNTLRRILLNDLPGIGVIGAEINGVQSEFSTLPGIRESVIEIFLNLRELIFTPTATCAQKVKQTKPFVYAKLNSELKIDNFPYVVTAKDLHIPEYEFVDPNQQIATILSPTAAENFKLTLLIGQGRGYQSWKKLPGVPQLMDQRFFEQFDSTQTNSKSVTFPIDAIFMPIRQVNFTVQEHSVDGEYIYFEVWTNGSINPFDAVKSAAKVGMKLMTACLTTLQDQQVYLDESKLPETPNFVQVNYNKMESESNFDQIFIEQLELSLRAYNCLKRANILTLADLSQQSFRDLMKLRNFGQKSADEVRAALSTYGIELKED</sequence>
<accession>Q0P3L0</accession>
<reference key="1">
    <citation type="journal article" date="2007" name="Mol. Biol. Evol.">
        <title>The complete chloroplast and mitochondrial DNA sequence of Ostreococcus tauri: organelle genomes of the smallest eukaryote are examples of compaction.</title>
        <authorList>
            <person name="Robbens S."/>
            <person name="Derelle E."/>
            <person name="Ferraz C."/>
            <person name="Wuyts J."/>
            <person name="Moreau H."/>
            <person name="Van de Peer Y."/>
        </authorList>
    </citation>
    <scope>NUCLEOTIDE SEQUENCE [LARGE SCALE GENOMIC DNA]</scope>
    <source>
        <strain>OTTH0595</strain>
    </source>
</reference>
<proteinExistence type="inferred from homology"/>